<proteinExistence type="predicted"/>
<comment type="subcellular location">
    <subcellularLocation>
        <location evidence="2">Membrane</location>
        <topology evidence="2">Multi-pass membrane protein</topology>
    </subcellularLocation>
</comment>
<protein>
    <recommendedName>
        <fullName>Uncharacterized protein YBR219C</fullName>
    </recommendedName>
</protein>
<keyword id="KW-0472">Membrane</keyword>
<keyword id="KW-1185">Reference proteome</keyword>
<keyword id="KW-0812">Transmembrane</keyword>
<keyword id="KW-1133">Transmembrane helix</keyword>
<name>YB69_YEAST</name>
<dbReference type="EMBL" id="Z36088">
    <property type="status" value="NOT_ANNOTATED_CDS"/>
    <property type="molecule type" value="Genomic_DNA"/>
</dbReference>
<dbReference type="EMBL" id="BK006936">
    <property type="protein sequence ID" value="DAA07335.1"/>
    <property type="molecule type" value="Genomic_DNA"/>
</dbReference>
<dbReference type="RefSeq" id="NP_009778.3">
    <property type="nucleotide sequence ID" value="NM_001178567.3"/>
</dbReference>
<dbReference type="BioGRID" id="32916">
    <property type="interactions" value="23"/>
</dbReference>
<dbReference type="DIP" id="DIP-8150N"/>
<dbReference type="FunCoup" id="P38317">
    <property type="interactions" value="45"/>
</dbReference>
<dbReference type="STRING" id="4932.YBR219C"/>
<dbReference type="PaxDb" id="4932-YBR219C"/>
<dbReference type="PeptideAtlas" id="P38317"/>
<dbReference type="EnsemblFungi" id="YBR219C_mRNA">
    <property type="protein sequence ID" value="YBR219C"/>
    <property type="gene ID" value="YBR219C"/>
</dbReference>
<dbReference type="GeneID" id="852520"/>
<dbReference type="KEGG" id="sce:YBR219C"/>
<dbReference type="AGR" id="SGD:S000000423"/>
<dbReference type="SGD" id="S000000423">
    <property type="gene designation" value="YBR219C"/>
</dbReference>
<dbReference type="VEuPathDB" id="FungiDB:YBR219C"/>
<dbReference type="eggNOG" id="KOG3574">
    <property type="taxonomic scope" value="Eukaryota"/>
</dbReference>
<dbReference type="GeneTree" id="ENSGT00940000154019"/>
<dbReference type="HOGENOM" id="CLU_1950054_0_0_1"/>
<dbReference type="InParanoid" id="P38317"/>
<dbReference type="OrthoDB" id="6415790at2759"/>
<dbReference type="BioCyc" id="YEAST:G3O-29155-MONOMER"/>
<dbReference type="BioGRID-ORCS" id="852520">
    <property type="hits" value="9 hits in 10 CRISPR screens"/>
</dbReference>
<dbReference type="PRO" id="PR:P38317"/>
<dbReference type="Proteomes" id="UP000002311">
    <property type="component" value="Chromosome II"/>
</dbReference>
<dbReference type="RNAct" id="P38317">
    <property type="molecule type" value="protein"/>
</dbReference>
<dbReference type="GO" id="GO:0016020">
    <property type="term" value="C:membrane"/>
    <property type="evidence" value="ECO:0007669"/>
    <property type="project" value="UniProtKB-SubCell"/>
</dbReference>
<dbReference type="GO" id="GO:0008521">
    <property type="term" value="F:acetyl-CoA transmembrane transporter activity"/>
    <property type="evidence" value="ECO:0007669"/>
    <property type="project" value="InterPro"/>
</dbReference>
<dbReference type="GO" id="GO:0035348">
    <property type="term" value="P:acetyl-CoA transmembrane transport"/>
    <property type="evidence" value="ECO:0007669"/>
    <property type="project" value="InterPro"/>
</dbReference>
<dbReference type="InterPro" id="IPR024371">
    <property type="entry name" value="AcetylCoA_trans_1-like"/>
</dbReference>
<dbReference type="InterPro" id="IPR004752">
    <property type="entry name" value="AmpG_permease/AT-1"/>
</dbReference>
<dbReference type="PANTHER" id="PTHR12778:SF9">
    <property type="entry name" value="ACETYL-COENZYME A TRANSPORTER 1"/>
    <property type="match status" value="1"/>
</dbReference>
<dbReference type="PANTHER" id="PTHR12778">
    <property type="entry name" value="SOLUTE CARRIER FAMILY 33 ACETYL-COA TRANSPORTER -RELATED"/>
    <property type="match status" value="1"/>
</dbReference>
<dbReference type="Pfam" id="PF13000">
    <property type="entry name" value="Acatn"/>
    <property type="match status" value="1"/>
</dbReference>
<accession>P38317</accession>
<accession>D6VQL5</accession>
<evidence type="ECO:0000255" key="1"/>
<evidence type="ECO:0000305" key="2"/>
<feature type="chain" id="PRO_0000202513" description="Uncharacterized protein YBR219C">
    <location>
        <begin position="1"/>
        <end position="127"/>
    </location>
</feature>
<feature type="transmembrane region" description="Helical" evidence="1">
    <location>
        <begin position="64"/>
        <end position="84"/>
    </location>
</feature>
<feature type="transmembrane region" description="Helical" evidence="1">
    <location>
        <begin position="101"/>
        <end position="118"/>
    </location>
</feature>
<reference key="1">
    <citation type="journal article" date="1994" name="EMBO J.">
        <title>Complete DNA sequence of yeast chromosome II.</title>
        <authorList>
            <person name="Feldmann H."/>
            <person name="Aigle M."/>
            <person name="Aljinovic G."/>
            <person name="Andre B."/>
            <person name="Baclet M.C."/>
            <person name="Barthe C."/>
            <person name="Baur A."/>
            <person name="Becam A.-M."/>
            <person name="Biteau N."/>
            <person name="Boles E."/>
            <person name="Brandt T."/>
            <person name="Brendel M."/>
            <person name="Brueckner M."/>
            <person name="Bussereau F."/>
            <person name="Christiansen C."/>
            <person name="Contreras R."/>
            <person name="Crouzet M."/>
            <person name="Cziepluch C."/>
            <person name="Demolis N."/>
            <person name="Delaveau T."/>
            <person name="Doignon F."/>
            <person name="Domdey H."/>
            <person name="Duesterhus S."/>
            <person name="Dubois E."/>
            <person name="Dujon B."/>
            <person name="El Bakkoury M."/>
            <person name="Entian K.-D."/>
            <person name="Feuermann M."/>
            <person name="Fiers W."/>
            <person name="Fobo G.M."/>
            <person name="Fritz C."/>
            <person name="Gassenhuber J."/>
            <person name="Glansdorff N."/>
            <person name="Goffeau A."/>
            <person name="Grivell L.A."/>
            <person name="de Haan M."/>
            <person name="Hein C."/>
            <person name="Herbert C.J."/>
            <person name="Hollenberg C.P."/>
            <person name="Holmstroem K."/>
            <person name="Jacq C."/>
            <person name="Jacquet M."/>
            <person name="Jauniaux J.-C."/>
            <person name="Jonniaux J.-L."/>
            <person name="Kallesoee T."/>
            <person name="Kiesau P."/>
            <person name="Kirchrath L."/>
            <person name="Koetter P."/>
            <person name="Korol S."/>
            <person name="Liebl S."/>
            <person name="Logghe M."/>
            <person name="Lohan A.J.E."/>
            <person name="Louis E.J."/>
            <person name="Li Z.Y."/>
            <person name="Maat M.J."/>
            <person name="Mallet L."/>
            <person name="Mannhaupt G."/>
            <person name="Messenguy F."/>
            <person name="Miosga T."/>
            <person name="Molemans F."/>
            <person name="Mueller S."/>
            <person name="Nasr F."/>
            <person name="Obermaier B."/>
            <person name="Perea J."/>
            <person name="Pierard A."/>
            <person name="Piravandi E."/>
            <person name="Pohl F.M."/>
            <person name="Pohl T.M."/>
            <person name="Potier S."/>
            <person name="Proft M."/>
            <person name="Purnelle B."/>
            <person name="Ramezani Rad M."/>
            <person name="Rieger M."/>
            <person name="Rose M."/>
            <person name="Schaaff-Gerstenschlaeger I."/>
            <person name="Scherens B."/>
            <person name="Schwarzlose C."/>
            <person name="Skala J."/>
            <person name="Slonimski P.P."/>
            <person name="Smits P.H.M."/>
            <person name="Souciet J.-L."/>
            <person name="Steensma H.Y."/>
            <person name="Stucka R."/>
            <person name="Urrestarazu L.A."/>
            <person name="van der Aart Q.J.M."/>
            <person name="Van Dyck L."/>
            <person name="Vassarotti A."/>
            <person name="Vetter I."/>
            <person name="Vierendeels F."/>
            <person name="Vissers S."/>
            <person name="Wagner G."/>
            <person name="de Wergifosse P."/>
            <person name="Wolfe K.H."/>
            <person name="Zagulski M."/>
            <person name="Zimmermann F.K."/>
            <person name="Mewes H.-W."/>
            <person name="Kleine K."/>
        </authorList>
    </citation>
    <scope>NUCLEOTIDE SEQUENCE [LARGE SCALE GENOMIC DNA]</scope>
    <source>
        <strain>ATCC 204508 / S288c</strain>
    </source>
</reference>
<reference key="2">
    <citation type="journal article" date="2014" name="G3 (Bethesda)">
        <title>The reference genome sequence of Saccharomyces cerevisiae: Then and now.</title>
        <authorList>
            <person name="Engel S.R."/>
            <person name="Dietrich F.S."/>
            <person name="Fisk D.G."/>
            <person name="Binkley G."/>
            <person name="Balakrishnan R."/>
            <person name="Costanzo M.C."/>
            <person name="Dwight S.S."/>
            <person name="Hitz B.C."/>
            <person name="Karra K."/>
            <person name="Nash R.S."/>
            <person name="Weng S."/>
            <person name="Wong E.D."/>
            <person name="Lloyd P."/>
            <person name="Skrzypek M.S."/>
            <person name="Miyasato S.R."/>
            <person name="Simison M."/>
            <person name="Cherry J.M."/>
        </authorList>
    </citation>
    <scope>GENOME REANNOTATION</scope>
    <source>
        <strain>ATCC 204508 / S288c</strain>
    </source>
</reference>
<organism>
    <name type="scientific">Saccharomyces cerevisiae (strain ATCC 204508 / S288c)</name>
    <name type="common">Baker's yeast</name>
    <dbReference type="NCBI Taxonomy" id="559292"/>
    <lineage>
        <taxon>Eukaryota</taxon>
        <taxon>Fungi</taxon>
        <taxon>Dikarya</taxon>
        <taxon>Ascomycota</taxon>
        <taxon>Saccharomycotina</taxon>
        <taxon>Saccharomycetes</taxon>
        <taxon>Saccharomycetales</taxon>
        <taxon>Saccharomycetaceae</taxon>
        <taxon>Saccharomyces</taxon>
    </lineage>
</organism>
<sequence length="127" mass="14787">MTLLNTLSNFGGTWPRLIIMSMINYFTVYQCTIPGTNKVYVTHGGSMQACTELLNGTVTILRDGYYITNLICIVVGLFLYFGYLKRKILHLQSLPISSWRFFHFFFTILAVTSRAIYYKSQNWRREC</sequence>
<gene>
    <name type="ordered locus">YBR219C</name>
    <name type="ORF">YBR1509</name>
</gene>